<evidence type="ECO:0000255" key="1">
    <source>
        <dbReference type="HAMAP-Rule" id="MF_01411"/>
    </source>
</evidence>
<evidence type="ECO:0000256" key="2">
    <source>
        <dbReference type="SAM" id="MobiDB-lite"/>
    </source>
</evidence>
<evidence type="ECO:0000305" key="3"/>
<gene>
    <name evidence="1" type="primary">lptD</name>
    <name type="synonym">imp</name>
    <name type="synonym">ostA</name>
    <name type="ordered locus">Aave_4764</name>
</gene>
<proteinExistence type="inferred from homology"/>
<sequence>MDLSSLPDPLRPTHSRLPARRRDRAEPPRFEQRALARLAAWMVCGLPLAALAQTDPGPGATAEPAPALRSSPLLQEKIPEDARPKLPIFVRGDHVSGQPDINATVEGNAELRRGDTIIHADRLDYAVPDDLAKARGNVRINRAGNVYEGSVLELQVDAFSGFFDDASYRFLANGAYGDARRVDFIDRDRALVHEATYTTCQKNDESTWKPAWIVRARSIKIDNAEQVGTAEGGVLEFQGVPILPVPGSFTFPLSDKRKTGLLPPTVGIDSVSGVVYSQPYYWNIAPNRDATITPMVMSKRGVSTSGEFRYLEPTYSGELRGDYMPSDRLRNRDRWALGLKHRGVFDTGIGGIGLNVDATRVSDDNYWRDFSTRTNGGISQLTQRLLPADATLFWGANDMSLSLRTLKWQTLQDVNARIVPPYDRMPQIHWGYMPSSLPGGFDGSVEADYTDFRADRALTGQPNARRSYAMAQFSRPFLAPAGFITPRLQFHATQYDFDSALPSTGRRTASRVLPTFSLDSGLVFERDARYFGRNFLQTLEPRAFYTYTPFRDQSMIPVYDTAANDFNFATIYTENGYSGSDRIADNNLLTLGVTTRLLDPEDGGEAARFGIAQRLRFSDQKVVMPGEAPVSERLSDVLVGAGINWTRQWGFDSTVQYNPKTSRSIRSTIGARYNPSDYRVINAAYRFQRGTSEQIDVGWQWPINDLWGDKGQNLGPGRGQGGGRWYSVGRLNYSLQDRKLVDTVIGFEYDSCCWIGRVVLERLQSSVTTATTRLLFQIEFVGFSRLSLGSDPIQTLKQNIPRYQYLREPVPPPSRFTNYD</sequence>
<comment type="function">
    <text evidence="1">Together with LptE, is involved in the assembly of lipopolysaccharide (LPS) at the surface of the outer membrane.</text>
</comment>
<comment type="subunit">
    <text evidence="1">Component of the lipopolysaccharide transport and assembly complex. Interacts with LptE and LptA.</text>
</comment>
<comment type="similarity">
    <text evidence="1">Belongs to the LptD family.</text>
</comment>
<comment type="caution">
    <text evidence="3">No signal sequence is predicted for this protein. All LptD proteins in this family possess a predicted signal sequence and are located on the bacterial outer membrane.</text>
</comment>
<protein>
    <recommendedName>
        <fullName evidence="1">LPS-assembly protein LptD</fullName>
    </recommendedName>
</protein>
<reference key="1">
    <citation type="submission" date="2006-12" db="EMBL/GenBank/DDBJ databases">
        <title>Complete sequence of Acidovorax avenae subsp. citrulli AAC00-1.</title>
        <authorList>
            <person name="Copeland A."/>
            <person name="Lucas S."/>
            <person name="Lapidus A."/>
            <person name="Barry K."/>
            <person name="Detter J.C."/>
            <person name="Glavina del Rio T."/>
            <person name="Dalin E."/>
            <person name="Tice H."/>
            <person name="Pitluck S."/>
            <person name="Kiss H."/>
            <person name="Brettin T."/>
            <person name="Bruce D."/>
            <person name="Han C."/>
            <person name="Tapia R."/>
            <person name="Gilna P."/>
            <person name="Schmutz J."/>
            <person name="Larimer F."/>
            <person name="Land M."/>
            <person name="Hauser L."/>
            <person name="Kyrpides N."/>
            <person name="Kim E."/>
            <person name="Stahl D."/>
            <person name="Richardson P."/>
        </authorList>
    </citation>
    <scope>NUCLEOTIDE SEQUENCE [LARGE SCALE GENOMIC DNA]</scope>
    <source>
        <strain>AAC00-1</strain>
    </source>
</reference>
<organism>
    <name type="scientific">Paracidovorax citrulli (strain AAC00-1)</name>
    <name type="common">Acidovorax citrulli</name>
    <dbReference type="NCBI Taxonomy" id="397945"/>
    <lineage>
        <taxon>Bacteria</taxon>
        <taxon>Pseudomonadati</taxon>
        <taxon>Pseudomonadota</taxon>
        <taxon>Betaproteobacteria</taxon>
        <taxon>Burkholderiales</taxon>
        <taxon>Comamonadaceae</taxon>
        <taxon>Paracidovorax</taxon>
    </lineage>
</organism>
<dbReference type="EMBL" id="CP000512">
    <property type="protein sequence ID" value="ABM35295.1"/>
    <property type="molecule type" value="Genomic_DNA"/>
</dbReference>
<dbReference type="RefSeq" id="WP_011797761.1">
    <property type="nucleotide sequence ID" value="NC_008752.1"/>
</dbReference>
<dbReference type="SMR" id="A1TWF7"/>
<dbReference type="STRING" id="397945.Aave_4764"/>
<dbReference type="GeneID" id="79789762"/>
<dbReference type="KEGG" id="aav:Aave_4764"/>
<dbReference type="eggNOG" id="COG1452">
    <property type="taxonomic scope" value="Bacteria"/>
</dbReference>
<dbReference type="HOGENOM" id="CLU_009039_0_0_4"/>
<dbReference type="OrthoDB" id="9760225at2"/>
<dbReference type="Proteomes" id="UP000002596">
    <property type="component" value="Chromosome"/>
</dbReference>
<dbReference type="GO" id="GO:0009279">
    <property type="term" value="C:cell outer membrane"/>
    <property type="evidence" value="ECO:0007669"/>
    <property type="project" value="UniProtKB-UniRule"/>
</dbReference>
<dbReference type="GO" id="GO:1990351">
    <property type="term" value="C:transporter complex"/>
    <property type="evidence" value="ECO:0007669"/>
    <property type="project" value="TreeGrafter"/>
</dbReference>
<dbReference type="GO" id="GO:0043165">
    <property type="term" value="P:Gram-negative-bacterium-type cell outer membrane assembly"/>
    <property type="evidence" value="ECO:0007669"/>
    <property type="project" value="UniProtKB-UniRule"/>
</dbReference>
<dbReference type="GO" id="GO:0015920">
    <property type="term" value="P:lipopolysaccharide transport"/>
    <property type="evidence" value="ECO:0007669"/>
    <property type="project" value="InterPro"/>
</dbReference>
<dbReference type="HAMAP" id="MF_01411">
    <property type="entry name" value="LPS_assembly_LptD"/>
    <property type="match status" value="1"/>
</dbReference>
<dbReference type="InterPro" id="IPR020889">
    <property type="entry name" value="LipoPS_assembly_LptD"/>
</dbReference>
<dbReference type="InterPro" id="IPR050218">
    <property type="entry name" value="LptD"/>
</dbReference>
<dbReference type="InterPro" id="IPR007543">
    <property type="entry name" value="LptD_C"/>
</dbReference>
<dbReference type="PANTHER" id="PTHR30189">
    <property type="entry name" value="LPS-ASSEMBLY PROTEIN"/>
    <property type="match status" value="1"/>
</dbReference>
<dbReference type="PANTHER" id="PTHR30189:SF1">
    <property type="entry name" value="LPS-ASSEMBLY PROTEIN LPTD"/>
    <property type="match status" value="1"/>
</dbReference>
<dbReference type="Pfam" id="PF04453">
    <property type="entry name" value="LptD"/>
    <property type="match status" value="1"/>
</dbReference>
<accession>A1TWF7</accession>
<name>LPTD_PARC0</name>
<feature type="chain" id="PRO_0000281582" description="LPS-assembly protein LptD">
    <location>
        <begin position="1"/>
        <end position="820"/>
    </location>
</feature>
<feature type="region of interest" description="Disordered" evidence="2">
    <location>
        <begin position="1"/>
        <end position="27"/>
    </location>
</feature>
<feature type="compositionally biased region" description="Basic residues" evidence="2">
    <location>
        <begin position="13"/>
        <end position="22"/>
    </location>
</feature>